<gene>
    <name type="primary">Chkb</name>
    <name type="synonym">Chetk</name>
    <name type="synonym">Chkl</name>
</gene>
<feature type="initiator methionine" description="Removed" evidence="2">
    <location>
        <position position="1"/>
    </location>
</feature>
<feature type="chain" id="PRO_0000206224" description="Choline/ethanolamine kinase">
    <location>
        <begin position="2"/>
        <end position="394"/>
    </location>
</feature>
<feature type="region of interest" description="Disordered" evidence="3">
    <location>
        <begin position="22"/>
        <end position="42"/>
    </location>
</feature>
<feature type="binding site" evidence="1">
    <location>
        <begin position="75"/>
        <end position="81"/>
    </location>
    <ligand>
        <name>ATP</name>
        <dbReference type="ChEBI" id="CHEBI:30616"/>
    </ligand>
</feature>
<feature type="binding site" evidence="1">
    <location>
        <begin position="77"/>
        <end position="79"/>
    </location>
    <ligand>
        <name>substrate</name>
    </ligand>
</feature>
<feature type="binding site" evidence="1">
    <location>
        <position position="104"/>
    </location>
    <ligand>
        <name>ATP</name>
        <dbReference type="ChEBI" id="CHEBI:30616"/>
    </ligand>
</feature>
<feature type="binding site" evidence="1">
    <location>
        <begin position="146"/>
        <end position="152"/>
    </location>
    <ligand>
        <name>ATP</name>
        <dbReference type="ChEBI" id="CHEBI:30616"/>
    </ligand>
</feature>
<feature type="binding site" evidence="1">
    <location>
        <position position="244"/>
    </location>
    <ligand>
        <name>ATP</name>
        <dbReference type="ChEBI" id="CHEBI:30616"/>
    </ligand>
</feature>
<feature type="binding site" evidence="1">
    <location>
        <position position="264"/>
    </location>
    <ligand>
        <name>ATP</name>
        <dbReference type="ChEBI" id="CHEBI:30616"/>
    </ligand>
</feature>
<feature type="modified residue" description="N-acetylalanine" evidence="2">
    <location>
        <position position="2"/>
    </location>
</feature>
<dbReference type="EC" id="2.7.1.32" evidence="2"/>
<dbReference type="EC" id="2.7.1.82" evidence="2"/>
<dbReference type="EMBL" id="AB006607">
    <property type="protein sequence ID" value="BAA24366.1"/>
    <property type="molecule type" value="mRNA"/>
</dbReference>
<dbReference type="EMBL" id="BC060515">
    <property type="protein sequence ID" value="AAH60515.1"/>
    <property type="molecule type" value="mRNA"/>
</dbReference>
<dbReference type="RefSeq" id="NP_058873.1">
    <property type="nucleotide sequence ID" value="NM_017177.1"/>
</dbReference>
<dbReference type="SMR" id="O54783"/>
<dbReference type="BioGRID" id="248021">
    <property type="interactions" value="1"/>
</dbReference>
<dbReference type="FunCoup" id="O54783">
    <property type="interactions" value="575"/>
</dbReference>
<dbReference type="STRING" id="10116.ENSRNOP00000015374"/>
<dbReference type="PhosphoSitePlus" id="O54783"/>
<dbReference type="PaxDb" id="10116-ENSRNOP00000015374"/>
<dbReference type="Ensembl" id="ENSRNOT00000015374.3">
    <property type="protein sequence ID" value="ENSRNOP00000015374.1"/>
    <property type="gene ID" value="ENSRNOG00000011404.3"/>
</dbReference>
<dbReference type="GeneID" id="29367"/>
<dbReference type="KEGG" id="rno:29367"/>
<dbReference type="AGR" id="RGD:61826"/>
<dbReference type="CTD" id="1120"/>
<dbReference type="RGD" id="61826">
    <property type="gene designation" value="Chkb"/>
</dbReference>
<dbReference type="eggNOG" id="KOG2686">
    <property type="taxonomic scope" value="Eukaryota"/>
</dbReference>
<dbReference type="GeneTree" id="ENSGT00950000182939"/>
<dbReference type="HOGENOM" id="CLU_012712_2_1_1"/>
<dbReference type="InParanoid" id="O54783"/>
<dbReference type="OMA" id="IETSIDY"/>
<dbReference type="OrthoDB" id="3649325at2759"/>
<dbReference type="PhylomeDB" id="O54783"/>
<dbReference type="TreeFam" id="TF313549"/>
<dbReference type="Reactome" id="R-RNO-1483191">
    <property type="pathway name" value="Synthesis of PC"/>
</dbReference>
<dbReference type="Reactome" id="R-RNO-1483213">
    <property type="pathway name" value="Synthesis of PE"/>
</dbReference>
<dbReference type="SABIO-RK" id="O54783"/>
<dbReference type="UniPathway" id="UPA00558">
    <property type="reaction ID" value="UER00741"/>
</dbReference>
<dbReference type="PRO" id="PR:O54783"/>
<dbReference type="Proteomes" id="UP000002494">
    <property type="component" value="Chromosome 7"/>
</dbReference>
<dbReference type="Bgee" id="ENSRNOG00000011404">
    <property type="expression patterns" value="Expressed in pancreas and 19 other cell types or tissues"/>
</dbReference>
<dbReference type="GO" id="GO:0005737">
    <property type="term" value="C:cytoplasm"/>
    <property type="evidence" value="ECO:0000318"/>
    <property type="project" value="GO_Central"/>
</dbReference>
<dbReference type="GO" id="GO:0005524">
    <property type="term" value="F:ATP binding"/>
    <property type="evidence" value="ECO:0007669"/>
    <property type="project" value="UniProtKB-KW"/>
</dbReference>
<dbReference type="GO" id="GO:0004103">
    <property type="term" value="F:choline kinase activity"/>
    <property type="evidence" value="ECO:0000314"/>
    <property type="project" value="RGD"/>
</dbReference>
<dbReference type="GO" id="GO:0004305">
    <property type="term" value="F:ethanolamine kinase activity"/>
    <property type="evidence" value="ECO:0000266"/>
    <property type="project" value="RGD"/>
</dbReference>
<dbReference type="GO" id="GO:0006657">
    <property type="term" value="P:CDP-choline pathway"/>
    <property type="evidence" value="ECO:0000318"/>
    <property type="project" value="GO_Central"/>
</dbReference>
<dbReference type="GO" id="GO:0007517">
    <property type="term" value="P:muscle organ development"/>
    <property type="evidence" value="ECO:0000266"/>
    <property type="project" value="RGD"/>
</dbReference>
<dbReference type="GO" id="GO:0006656">
    <property type="term" value="P:phosphatidylcholine biosynthetic process"/>
    <property type="evidence" value="ECO:0000266"/>
    <property type="project" value="RGD"/>
</dbReference>
<dbReference type="GO" id="GO:0006646">
    <property type="term" value="P:phosphatidylethanolamine biosynthetic process"/>
    <property type="evidence" value="ECO:0000250"/>
    <property type="project" value="UniProtKB"/>
</dbReference>
<dbReference type="CDD" id="cd05156">
    <property type="entry name" value="ChoK_euk"/>
    <property type="match status" value="1"/>
</dbReference>
<dbReference type="FunFam" id="3.90.1200.10:FF:000005">
    <property type="entry name" value="Choline kinase alpha"/>
    <property type="match status" value="1"/>
</dbReference>
<dbReference type="Gene3D" id="3.90.1200.10">
    <property type="match status" value="1"/>
</dbReference>
<dbReference type="Gene3D" id="3.30.200.20">
    <property type="entry name" value="Phosphorylase Kinase, domain 1"/>
    <property type="match status" value="1"/>
</dbReference>
<dbReference type="InterPro" id="IPR011009">
    <property type="entry name" value="Kinase-like_dom_sf"/>
</dbReference>
<dbReference type="PANTHER" id="PTHR22603">
    <property type="entry name" value="CHOLINE/ETHANOALAMINE KINASE"/>
    <property type="match status" value="1"/>
</dbReference>
<dbReference type="PANTHER" id="PTHR22603:SF35">
    <property type="entry name" value="CHOLINE_ETHANOLAMINE KINASE"/>
    <property type="match status" value="1"/>
</dbReference>
<dbReference type="Pfam" id="PF01633">
    <property type="entry name" value="Choline_kinase"/>
    <property type="match status" value="1"/>
</dbReference>
<dbReference type="SUPFAM" id="SSF56112">
    <property type="entry name" value="Protein kinase-like (PK-like)"/>
    <property type="match status" value="1"/>
</dbReference>
<proteinExistence type="evidence at protein level"/>
<accession>O54783</accession>
<keyword id="KW-0007">Acetylation</keyword>
<keyword id="KW-0067">ATP-binding</keyword>
<keyword id="KW-0903">Direct protein sequencing</keyword>
<keyword id="KW-0418">Kinase</keyword>
<keyword id="KW-0444">Lipid biosynthesis</keyword>
<keyword id="KW-0443">Lipid metabolism</keyword>
<keyword id="KW-0547">Nucleotide-binding</keyword>
<keyword id="KW-0594">Phospholipid biosynthesis</keyword>
<keyword id="KW-1208">Phospholipid metabolism</keyword>
<keyword id="KW-1185">Reference proteome</keyword>
<keyword id="KW-0808">Transferase</keyword>
<evidence type="ECO:0000250" key="1"/>
<evidence type="ECO:0000250" key="2">
    <source>
        <dbReference type="UniProtKB" id="Q9Y259"/>
    </source>
</evidence>
<evidence type="ECO:0000256" key="3">
    <source>
        <dbReference type="SAM" id="MobiDB-lite"/>
    </source>
</evidence>
<evidence type="ECO:0000305" key="4"/>
<name>CHKB_RAT</name>
<organism>
    <name type="scientific">Rattus norvegicus</name>
    <name type="common">Rat</name>
    <dbReference type="NCBI Taxonomy" id="10116"/>
    <lineage>
        <taxon>Eukaryota</taxon>
        <taxon>Metazoa</taxon>
        <taxon>Chordata</taxon>
        <taxon>Craniata</taxon>
        <taxon>Vertebrata</taxon>
        <taxon>Euteleostomi</taxon>
        <taxon>Mammalia</taxon>
        <taxon>Eutheria</taxon>
        <taxon>Euarchontoglires</taxon>
        <taxon>Glires</taxon>
        <taxon>Rodentia</taxon>
        <taxon>Myomorpha</taxon>
        <taxon>Muroidea</taxon>
        <taxon>Muridae</taxon>
        <taxon>Murinae</taxon>
        <taxon>Rattus</taxon>
    </lineage>
</organism>
<sequence>MAADGTGVVGGGAVGGPLSKDGLLDAKCPEPIPNRRRSSSLSRDAQRRAYQWCREYLGGAWRRARPEELSVCPVSGGLSNLLFRCSLPNHVPSMGGEPREVLLRLYGAILQGVDSLVLESVMFAILAERSLGPQLYGVFPEGRLEQYLPSRPLKTQELRDPVLSGAIATKMARFHGMEMPFTKEPRWLFGTMERYLKQIQDLPSTSLPQMNLVEMYSLKDEMNHLRTLLDATPSPVVFCHNDIQEGNILLLSEPDSDDNLMLVDFEYSSYNYRGFDIGNHFCEWVYDYTYEEWPFYKARPADYPTREQQLLFIRHYLAEVQKGEVLSEEEQKKQEEDLLIEISRYALASHFFWGLWSTLQASMSTIEFGYLEYAQSRFQFYFQQKGQLTSFLSP</sequence>
<protein>
    <recommendedName>
        <fullName>Choline/ethanolamine kinase</fullName>
    </recommendedName>
    <alternativeName>
        <fullName>Choline kinase beta</fullName>
        <shortName>CK</shortName>
        <shortName>CKB</shortName>
        <ecNumber evidence="2">2.7.1.32</ecNumber>
    </alternativeName>
    <alternativeName>
        <fullName>Ethanolamine kinase</fullName>
        <shortName>EK</shortName>
        <ecNumber evidence="2">2.7.1.82</ecNumber>
    </alternativeName>
    <alternativeName>
        <fullName>choline/ethanolamine kinase beta</fullName>
        <shortName>CKEKB</shortName>
    </alternativeName>
</protein>
<reference key="1">
    <citation type="journal article" date="1998" name="Biochim. Biophys. Acta">
        <title>Complementary DNA sequence for a 42 kDa rat kidney choline/ethanolamine kinase.</title>
        <authorList>
            <person name="Aoyama C."/>
            <person name="Nakashima K."/>
            <person name="Matsui M."/>
            <person name="Ishidate K."/>
        </authorList>
    </citation>
    <scope>NUCLEOTIDE SEQUENCE [MRNA]</scope>
    <scope>PARTIAL PROTEIN SEQUENCE</scope>
    <source>
        <strain>Sprague-Dawley</strain>
        <tissue>Kidney</tissue>
    </source>
</reference>
<reference key="2">
    <citation type="journal article" date="2004" name="Genome Res.">
        <title>The status, quality, and expansion of the NIH full-length cDNA project: the Mammalian Gene Collection (MGC).</title>
        <authorList>
            <consortium name="The MGC Project Team"/>
        </authorList>
    </citation>
    <scope>NUCLEOTIDE SEQUENCE [LARGE SCALE MRNA]</scope>
    <source>
        <tissue>Prostate</tissue>
    </source>
</reference>
<comment type="function">
    <text evidence="2">Has a key role in phospholipid metabolism, and catalyzes the first step of phosphatidylethanolamine and phosphatidylcholine biosynthesis.</text>
</comment>
<comment type="catalytic activity">
    <reaction evidence="2">
        <text>choline + ATP = phosphocholine + ADP + H(+)</text>
        <dbReference type="Rhea" id="RHEA:12837"/>
        <dbReference type="ChEBI" id="CHEBI:15354"/>
        <dbReference type="ChEBI" id="CHEBI:15378"/>
        <dbReference type="ChEBI" id="CHEBI:30616"/>
        <dbReference type="ChEBI" id="CHEBI:295975"/>
        <dbReference type="ChEBI" id="CHEBI:456216"/>
        <dbReference type="EC" id="2.7.1.32"/>
    </reaction>
    <physiologicalReaction direction="left-to-right" evidence="2">
        <dbReference type="Rhea" id="RHEA:12838"/>
    </physiologicalReaction>
</comment>
<comment type="catalytic activity">
    <reaction evidence="2">
        <text>ethanolamine + ATP = phosphoethanolamine + ADP + H(+)</text>
        <dbReference type="Rhea" id="RHEA:13069"/>
        <dbReference type="ChEBI" id="CHEBI:15378"/>
        <dbReference type="ChEBI" id="CHEBI:30616"/>
        <dbReference type="ChEBI" id="CHEBI:57603"/>
        <dbReference type="ChEBI" id="CHEBI:58190"/>
        <dbReference type="ChEBI" id="CHEBI:456216"/>
        <dbReference type="EC" id="2.7.1.82"/>
    </reaction>
    <physiologicalReaction direction="left-to-right" evidence="2">
        <dbReference type="Rhea" id="RHEA:13070"/>
    </physiologicalReaction>
</comment>
<comment type="pathway">
    <text evidence="2">Phospholipid metabolism; phosphatidylethanolamine biosynthesis; phosphatidylethanolamine from ethanolamine: step 1/3.</text>
</comment>
<comment type="subunit">
    <text evidence="2">Homodimer, and heterodimer with CHKA.</text>
</comment>
<comment type="similarity">
    <text evidence="4">Belongs to the choline/ethanolamine kinase family.</text>
</comment>